<evidence type="ECO:0000255" key="1">
    <source>
        <dbReference type="HAMAP-Rule" id="MF_00391"/>
    </source>
</evidence>
<evidence type="ECO:0000305" key="2"/>
<reference key="1">
    <citation type="journal article" date="2007" name="Microbiology">
        <title>Comparative analysis of the Corynebacterium glutamicum group and complete genome sequence of strain R.</title>
        <authorList>
            <person name="Yukawa H."/>
            <person name="Omumasaba C.A."/>
            <person name="Nonaka H."/>
            <person name="Kos P."/>
            <person name="Okai N."/>
            <person name="Suzuki N."/>
            <person name="Suda M."/>
            <person name="Tsuge Y."/>
            <person name="Watanabe J."/>
            <person name="Ikeda Y."/>
            <person name="Vertes A.A."/>
            <person name="Inui M."/>
        </authorList>
    </citation>
    <scope>NUCLEOTIDE SEQUENCE [LARGE SCALE GENOMIC DNA]</scope>
    <source>
        <strain>R</strain>
    </source>
</reference>
<gene>
    <name evidence="1" type="primary">rpmH</name>
    <name type="ordered locus">cgR_2989</name>
</gene>
<protein>
    <recommendedName>
        <fullName evidence="1">Large ribosomal subunit protein bL34</fullName>
    </recommendedName>
    <alternativeName>
        <fullName evidence="2">50S ribosomal protein L34</fullName>
    </alternativeName>
</protein>
<accession>A4QIE6</accession>
<keyword id="KW-0687">Ribonucleoprotein</keyword>
<keyword id="KW-0689">Ribosomal protein</keyword>
<name>RL34_CORGB</name>
<comment type="similarity">
    <text evidence="1">Belongs to the bacterial ribosomal protein bL34 family.</text>
</comment>
<dbReference type="EMBL" id="AP009044">
    <property type="protein sequence ID" value="BAF56012.1"/>
    <property type="molecule type" value="Genomic_DNA"/>
</dbReference>
<dbReference type="RefSeq" id="WP_003855320.1">
    <property type="nucleotide sequence ID" value="NC_009342.1"/>
</dbReference>
<dbReference type="SMR" id="A4QIE6"/>
<dbReference type="GeneID" id="1021043"/>
<dbReference type="KEGG" id="cgt:cgR_2989"/>
<dbReference type="HOGENOM" id="CLU_129938_2_1_11"/>
<dbReference type="Proteomes" id="UP000006698">
    <property type="component" value="Chromosome"/>
</dbReference>
<dbReference type="GO" id="GO:1990904">
    <property type="term" value="C:ribonucleoprotein complex"/>
    <property type="evidence" value="ECO:0007669"/>
    <property type="project" value="UniProtKB-KW"/>
</dbReference>
<dbReference type="GO" id="GO:0005840">
    <property type="term" value="C:ribosome"/>
    <property type="evidence" value="ECO:0007669"/>
    <property type="project" value="UniProtKB-KW"/>
</dbReference>
<dbReference type="GO" id="GO:0003735">
    <property type="term" value="F:structural constituent of ribosome"/>
    <property type="evidence" value="ECO:0007669"/>
    <property type="project" value="InterPro"/>
</dbReference>
<dbReference type="GO" id="GO:0006412">
    <property type="term" value="P:translation"/>
    <property type="evidence" value="ECO:0007669"/>
    <property type="project" value="UniProtKB-UniRule"/>
</dbReference>
<dbReference type="FunFam" id="1.10.287.3980:FF:000001">
    <property type="entry name" value="Mitochondrial ribosomal protein L34"/>
    <property type="match status" value="1"/>
</dbReference>
<dbReference type="Gene3D" id="1.10.287.3980">
    <property type="match status" value="1"/>
</dbReference>
<dbReference type="HAMAP" id="MF_00391">
    <property type="entry name" value="Ribosomal_bL34"/>
    <property type="match status" value="1"/>
</dbReference>
<dbReference type="InterPro" id="IPR000271">
    <property type="entry name" value="Ribosomal_bL34"/>
</dbReference>
<dbReference type="InterPro" id="IPR020939">
    <property type="entry name" value="Ribosomal_bL34_CS"/>
</dbReference>
<dbReference type="NCBIfam" id="TIGR01030">
    <property type="entry name" value="rpmH_bact"/>
    <property type="match status" value="1"/>
</dbReference>
<dbReference type="PANTHER" id="PTHR14503:SF4">
    <property type="entry name" value="LARGE RIBOSOMAL SUBUNIT PROTEIN BL34M"/>
    <property type="match status" value="1"/>
</dbReference>
<dbReference type="PANTHER" id="PTHR14503">
    <property type="entry name" value="MITOCHONDRIAL RIBOSOMAL PROTEIN 34 FAMILY MEMBER"/>
    <property type="match status" value="1"/>
</dbReference>
<dbReference type="Pfam" id="PF00468">
    <property type="entry name" value="Ribosomal_L34"/>
    <property type="match status" value="1"/>
</dbReference>
<dbReference type="PROSITE" id="PS00784">
    <property type="entry name" value="RIBOSOMAL_L34"/>
    <property type="match status" value="1"/>
</dbReference>
<feature type="chain" id="PRO_1000013326" description="Large ribosomal subunit protein bL34">
    <location>
        <begin position="1"/>
        <end position="47"/>
    </location>
</feature>
<proteinExistence type="inferred from homology"/>
<sequence>MAKGKRTFQPNNRRRARVHGFRLRMRTRAGRAIVAARRRKGRAKLTA</sequence>
<organism>
    <name type="scientific">Corynebacterium glutamicum (strain R)</name>
    <dbReference type="NCBI Taxonomy" id="340322"/>
    <lineage>
        <taxon>Bacteria</taxon>
        <taxon>Bacillati</taxon>
        <taxon>Actinomycetota</taxon>
        <taxon>Actinomycetes</taxon>
        <taxon>Mycobacteriales</taxon>
        <taxon>Corynebacteriaceae</taxon>
        <taxon>Corynebacterium</taxon>
    </lineage>
</organism>